<proteinExistence type="inferred from homology"/>
<feature type="chain" id="PRO_1000090834" description="Cysteine--tRNA ligase">
    <location>
        <begin position="1"/>
        <end position="461"/>
    </location>
</feature>
<feature type="short sequence motif" description="'HIGH' region">
    <location>
        <begin position="30"/>
        <end position="40"/>
    </location>
</feature>
<feature type="short sequence motif" description="'KMSKS' region">
    <location>
        <begin position="266"/>
        <end position="270"/>
    </location>
</feature>
<feature type="binding site" evidence="1">
    <location>
        <position position="28"/>
    </location>
    <ligand>
        <name>Zn(2+)</name>
        <dbReference type="ChEBI" id="CHEBI:29105"/>
    </ligand>
</feature>
<feature type="binding site" evidence="1">
    <location>
        <position position="209"/>
    </location>
    <ligand>
        <name>Zn(2+)</name>
        <dbReference type="ChEBI" id="CHEBI:29105"/>
    </ligand>
</feature>
<feature type="binding site" evidence="1">
    <location>
        <position position="234"/>
    </location>
    <ligand>
        <name>Zn(2+)</name>
        <dbReference type="ChEBI" id="CHEBI:29105"/>
    </ligand>
</feature>
<feature type="binding site" evidence="1">
    <location>
        <position position="238"/>
    </location>
    <ligand>
        <name>Zn(2+)</name>
        <dbReference type="ChEBI" id="CHEBI:29105"/>
    </ligand>
</feature>
<feature type="binding site" evidence="1">
    <location>
        <position position="269"/>
    </location>
    <ligand>
        <name>ATP</name>
        <dbReference type="ChEBI" id="CHEBI:30616"/>
    </ligand>
</feature>
<sequence>MLKIFNTLTRQKEEFKPIHAGEVGMYVCGITVYDLCHIGHGRTFVAFDVVARYLRFLGYKLKYVRNITDIDDKIIKRANENGESFVAMVDRMIAEMHKDFDALNILRPDMEPRATHHIAEIIELTEQLIAKGHAYVADNGDVMFDVPTDPTYGVLSRQDLDQLQAGARVDVVDDKRNPMDFVLWKMSKEGEPSWPSPWGAGRPGWHIECSAMNCKQLGNHFDIHGGGSDLMFPHHENEIAQSTCAHDGQYVNYWMHSGMVMVDREKMSKSLGNFFTVRDVLKYYDAETVRYFLMSGHYRSQLNYSEENLKQARAALERLYTALRGTDKTVAPAGGEAFEARFIEAMDDDFNTPEAYSVLFDMAREVNRLKAEDMAAANAMASHLRKLSAVLGLLEQEPEAFLQSGAQADDSEVAEIEALIQQRLDARKAKDWAAADAARDRLNEMGIVLEDGPQGTTWRRK</sequence>
<organism>
    <name type="scientific">Escherichia coli (strain K12 / DH10B)</name>
    <dbReference type="NCBI Taxonomy" id="316385"/>
    <lineage>
        <taxon>Bacteria</taxon>
        <taxon>Pseudomonadati</taxon>
        <taxon>Pseudomonadota</taxon>
        <taxon>Gammaproteobacteria</taxon>
        <taxon>Enterobacterales</taxon>
        <taxon>Enterobacteriaceae</taxon>
        <taxon>Escherichia</taxon>
    </lineage>
</organism>
<reference key="1">
    <citation type="journal article" date="2008" name="J. Bacteriol.">
        <title>The complete genome sequence of Escherichia coli DH10B: insights into the biology of a laboratory workhorse.</title>
        <authorList>
            <person name="Durfee T."/>
            <person name="Nelson R."/>
            <person name="Baldwin S."/>
            <person name="Plunkett G. III"/>
            <person name="Burland V."/>
            <person name="Mau B."/>
            <person name="Petrosino J.F."/>
            <person name="Qin X."/>
            <person name="Muzny D.M."/>
            <person name="Ayele M."/>
            <person name="Gibbs R.A."/>
            <person name="Csorgo B."/>
            <person name="Posfai G."/>
            <person name="Weinstock G.M."/>
            <person name="Blattner F.R."/>
        </authorList>
    </citation>
    <scope>NUCLEOTIDE SEQUENCE [LARGE SCALE GENOMIC DNA]</scope>
    <source>
        <strain>K12 / DH10B</strain>
    </source>
</reference>
<protein>
    <recommendedName>
        <fullName evidence="1">Cysteine--tRNA ligase</fullName>
        <ecNumber evidence="1">6.1.1.16</ecNumber>
    </recommendedName>
    <alternativeName>
        <fullName evidence="1">Cysteinyl-tRNA synthetase</fullName>
        <shortName evidence="1">CysRS</shortName>
    </alternativeName>
</protein>
<keyword id="KW-0030">Aminoacyl-tRNA synthetase</keyword>
<keyword id="KW-0067">ATP-binding</keyword>
<keyword id="KW-0963">Cytoplasm</keyword>
<keyword id="KW-0436">Ligase</keyword>
<keyword id="KW-0479">Metal-binding</keyword>
<keyword id="KW-0547">Nucleotide-binding</keyword>
<keyword id="KW-0648">Protein biosynthesis</keyword>
<keyword id="KW-0862">Zinc</keyword>
<comment type="catalytic activity">
    <reaction evidence="1">
        <text>tRNA(Cys) + L-cysteine + ATP = L-cysteinyl-tRNA(Cys) + AMP + diphosphate</text>
        <dbReference type="Rhea" id="RHEA:17773"/>
        <dbReference type="Rhea" id="RHEA-COMP:9661"/>
        <dbReference type="Rhea" id="RHEA-COMP:9679"/>
        <dbReference type="ChEBI" id="CHEBI:30616"/>
        <dbReference type="ChEBI" id="CHEBI:33019"/>
        <dbReference type="ChEBI" id="CHEBI:35235"/>
        <dbReference type="ChEBI" id="CHEBI:78442"/>
        <dbReference type="ChEBI" id="CHEBI:78517"/>
        <dbReference type="ChEBI" id="CHEBI:456215"/>
        <dbReference type="EC" id="6.1.1.16"/>
    </reaction>
</comment>
<comment type="cofactor">
    <cofactor evidence="1">
        <name>Zn(2+)</name>
        <dbReference type="ChEBI" id="CHEBI:29105"/>
    </cofactor>
    <text evidence="1">Binds 1 zinc ion per subunit.</text>
</comment>
<comment type="subunit">
    <text evidence="1">Monomer.</text>
</comment>
<comment type="subcellular location">
    <subcellularLocation>
        <location evidence="1">Cytoplasm</location>
    </subcellularLocation>
</comment>
<comment type="similarity">
    <text evidence="1">Belongs to the class-I aminoacyl-tRNA synthetase family.</text>
</comment>
<gene>
    <name evidence="1" type="primary">cysS</name>
    <name type="ordered locus">ECDH10B_0482</name>
</gene>
<accession>B1XGC4</accession>
<dbReference type="EC" id="6.1.1.16" evidence="1"/>
<dbReference type="EMBL" id="CP000948">
    <property type="protein sequence ID" value="ACB01651.1"/>
    <property type="molecule type" value="Genomic_DNA"/>
</dbReference>
<dbReference type="RefSeq" id="WP_000912385.1">
    <property type="nucleotide sequence ID" value="NC_010473.1"/>
</dbReference>
<dbReference type="SMR" id="B1XGC4"/>
<dbReference type="KEGG" id="ecd:ECDH10B_0482"/>
<dbReference type="HOGENOM" id="CLU_013528_0_1_6"/>
<dbReference type="GO" id="GO:0005829">
    <property type="term" value="C:cytosol"/>
    <property type="evidence" value="ECO:0007669"/>
    <property type="project" value="TreeGrafter"/>
</dbReference>
<dbReference type="GO" id="GO:0005524">
    <property type="term" value="F:ATP binding"/>
    <property type="evidence" value="ECO:0007669"/>
    <property type="project" value="UniProtKB-UniRule"/>
</dbReference>
<dbReference type="GO" id="GO:0004817">
    <property type="term" value="F:cysteine-tRNA ligase activity"/>
    <property type="evidence" value="ECO:0007669"/>
    <property type="project" value="UniProtKB-UniRule"/>
</dbReference>
<dbReference type="GO" id="GO:0008270">
    <property type="term" value="F:zinc ion binding"/>
    <property type="evidence" value="ECO:0007669"/>
    <property type="project" value="UniProtKB-UniRule"/>
</dbReference>
<dbReference type="GO" id="GO:0006423">
    <property type="term" value="P:cysteinyl-tRNA aminoacylation"/>
    <property type="evidence" value="ECO:0007669"/>
    <property type="project" value="UniProtKB-UniRule"/>
</dbReference>
<dbReference type="CDD" id="cd07963">
    <property type="entry name" value="Anticodon_Ia_Cys"/>
    <property type="match status" value="1"/>
</dbReference>
<dbReference type="CDD" id="cd00672">
    <property type="entry name" value="CysRS_core"/>
    <property type="match status" value="1"/>
</dbReference>
<dbReference type="FunFam" id="1.20.120.1910:FF:000001">
    <property type="entry name" value="Cysteine--tRNA ligase"/>
    <property type="match status" value="1"/>
</dbReference>
<dbReference type="FunFam" id="3.40.50.620:FF:000009">
    <property type="entry name" value="Cysteine--tRNA ligase"/>
    <property type="match status" value="1"/>
</dbReference>
<dbReference type="Gene3D" id="1.20.120.1910">
    <property type="entry name" value="Cysteine-tRNA ligase, C-terminal anti-codon recognition domain"/>
    <property type="match status" value="1"/>
</dbReference>
<dbReference type="Gene3D" id="3.40.50.620">
    <property type="entry name" value="HUPs"/>
    <property type="match status" value="1"/>
</dbReference>
<dbReference type="HAMAP" id="MF_00041">
    <property type="entry name" value="Cys_tRNA_synth"/>
    <property type="match status" value="1"/>
</dbReference>
<dbReference type="InterPro" id="IPR015803">
    <property type="entry name" value="Cys-tRNA-ligase"/>
</dbReference>
<dbReference type="InterPro" id="IPR015273">
    <property type="entry name" value="Cys-tRNA-synt_Ia_DALR"/>
</dbReference>
<dbReference type="InterPro" id="IPR024909">
    <property type="entry name" value="Cys-tRNA/MSH_ligase"/>
</dbReference>
<dbReference type="InterPro" id="IPR056411">
    <property type="entry name" value="CysS_C"/>
</dbReference>
<dbReference type="InterPro" id="IPR014729">
    <property type="entry name" value="Rossmann-like_a/b/a_fold"/>
</dbReference>
<dbReference type="InterPro" id="IPR032678">
    <property type="entry name" value="tRNA-synt_1_cat_dom"/>
</dbReference>
<dbReference type="InterPro" id="IPR009080">
    <property type="entry name" value="tRNAsynth_Ia_anticodon-bd"/>
</dbReference>
<dbReference type="NCBIfam" id="TIGR00435">
    <property type="entry name" value="cysS"/>
    <property type="match status" value="1"/>
</dbReference>
<dbReference type="PANTHER" id="PTHR10890:SF3">
    <property type="entry name" value="CYSTEINE--TRNA LIGASE, CYTOPLASMIC"/>
    <property type="match status" value="1"/>
</dbReference>
<dbReference type="PANTHER" id="PTHR10890">
    <property type="entry name" value="CYSTEINYL-TRNA SYNTHETASE"/>
    <property type="match status" value="1"/>
</dbReference>
<dbReference type="Pfam" id="PF23493">
    <property type="entry name" value="CysS_C"/>
    <property type="match status" value="1"/>
</dbReference>
<dbReference type="Pfam" id="PF09190">
    <property type="entry name" value="DALR_2"/>
    <property type="match status" value="1"/>
</dbReference>
<dbReference type="Pfam" id="PF01406">
    <property type="entry name" value="tRNA-synt_1e"/>
    <property type="match status" value="1"/>
</dbReference>
<dbReference type="PRINTS" id="PR00983">
    <property type="entry name" value="TRNASYNTHCYS"/>
</dbReference>
<dbReference type="SMART" id="SM00840">
    <property type="entry name" value="DALR_2"/>
    <property type="match status" value="1"/>
</dbReference>
<dbReference type="SUPFAM" id="SSF47323">
    <property type="entry name" value="Anticodon-binding domain of a subclass of class I aminoacyl-tRNA synthetases"/>
    <property type="match status" value="1"/>
</dbReference>
<dbReference type="SUPFAM" id="SSF52374">
    <property type="entry name" value="Nucleotidylyl transferase"/>
    <property type="match status" value="1"/>
</dbReference>
<name>SYC_ECODH</name>
<evidence type="ECO:0000255" key="1">
    <source>
        <dbReference type="HAMAP-Rule" id="MF_00041"/>
    </source>
</evidence>